<evidence type="ECO:0000255" key="1">
    <source>
        <dbReference type="HAMAP-Rule" id="MF_00208"/>
    </source>
</evidence>
<accession>Q11RG9</accession>
<organism>
    <name type="scientific">Cytophaga hutchinsonii (strain ATCC 33406 / DSM 1761 / CIP 103989 / NBRC 15051 / NCIMB 9469 / D465)</name>
    <dbReference type="NCBI Taxonomy" id="269798"/>
    <lineage>
        <taxon>Bacteria</taxon>
        <taxon>Pseudomonadati</taxon>
        <taxon>Bacteroidota</taxon>
        <taxon>Cytophagia</taxon>
        <taxon>Cytophagales</taxon>
        <taxon>Cytophagaceae</taxon>
        <taxon>Cytophaga</taxon>
    </lineage>
</organism>
<reference key="1">
    <citation type="journal article" date="2007" name="Appl. Environ. Microbiol.">
        <title>Genome sequence of the cellulolytic gliding bacterium Cytophaga hutchinsonii.</title>
        <authorList>
            <person name="Xie G."/>
            <person name="Bruce D.C."/>
            <person name="Challacombe J.F."/>
            <person name="Chertkov O."/>
            <person name="Detter J.C."/>
            <person name="Gilna P."/>
            <person name="Han C.S."/>
            <person name="Lucas S."/>
            <person name="Misra M."/>
            <person name="Myers G.L."/>
            <person name="Richardson P."/>
            <person name="Tapia R."/>
            <person name="Thayer N."/>
            <person name="Thompson L.S."/>
            <person name="Brettin T.S."/>
            <person name="Henrissat B."/>
            <person name="Wilson D.B."/>
            <person name="McBride M.J."/>
        </authorList>
    </citation>
    <scope>NUCLEOTIDE SEQUENCE [LARGE SCALE GENOMIC DNA]</scope>
    <source>
        <strain>ATCC 33406 / DSM 1761 / JCM 20678 / CIP 103989 / IAM 12607 / NBRC 15051 / NCIMB 9469 / D465</strain>
    </source>
</reference>
<gene>
    <name evidence="1" type="primary">murE</name>
    <name type="ordered locus">CHU_2745</name>
</gene>
<sequence>MQIKDLIYKVSLISVSGRTDVDVTAICFDSRKVEKGSMFIAVRGVSSDGHSFIADVIQKGATAVVCEELPEIESTADCTIIQVKDSAEALGMIASNFYDSPSSKLKLVGVTGTNGKTTTVTLLYRLFRKLGYKTGLLSTVENIIEDKVVQATHTTPDAISLNKLLADMVKAGCTHCFMEVSSHAAVQRRIAGLQFAGGLFSNITHDHLDYHKTFDEYIKAKKLFFDGLPNDSFALINSDDKRGRVMIQNTRAKTYTYSLLALADFKGKLISTTMQGLEMDVDGIQAWFRLIGNFNAYNLLAVYATAVLLGEDKEEVLMQLSTIEAANGRFEQQISATRITVIVDYAHTPDALKNVLETITELKGANKIITVVGCGGNRDAAKRPVMADIACQFSDHVVLTSDNPRNEEPQAILTEMEKGVRIVDKKKVLSVLDRKEAIKVACTLASTGDIILVAGKGHETYQEIKGVKYPFDDRLIIKELLDTLGK</sequence>
<keyword id="KW-0067">ATP-binding</keyword>
<keyword id="KW-0131">Cell cycle</keyword>
<keyword id="KW-0132">Cell division</keyword>
<keyword id="KW-0133">Cell shape</keyword>
<keyword id="KW-0961">Cell wall biogenesis/degradation</keyword>
<keyword id="KW-0963">Cytoplasm</keyword>
<keyword id="KW-0436">Ligase</keyword>
<keyword id="KW-0460">Magnesium</keyword>
<keyword id="KW-0547">Nucleotide-binding</keyword>
<keyword id="KW-0573">Peptidoglycan synthesis</keyword>
<keyword id="KW-1185">Reference proteome</keyword>
<name>MURE_CYTH3</name>
<feature type="chain" id="PRO_1000012350" description="UDP-N-acetylmuramoyl-L-alanyl-D-glutamate--2,6-diaminopimelate ligase">
    <location>
        <begin position="1"/>
        <end position="486"/>
    </location>
</feature>
<feature type="short sequence motif" description="Meso-diaminopimelate recognition motif">
    <location>
        <begin position="402"/>
        <end position="405"/>
    </location>
</feature>
<feature type="binding site" evidence="1">
    <location>
        <position position="30"/>
    </location>
    <ligand>
        <name>UDP-N-acetyl-alpha-D-muramoyl-L-alanyl-D-glutamate</name>
        <dbReference type="ChEBI" id="CHEBI:83900"/>
    </ligand>
</feature>
<feature type="binding site" evidence="1">
    <location>
        <begin position="112"/>
        <end position="118"/>
    </location>
    <ligand>
        <name>ATP</name>
        <dbReference type="ChEBI" id="CHEBI:30616"/>
    </ligand>
</feature>
<feature type="binding site" evidence="1">
    <location>
        <begin position="154"/>
        <end position="155"/>
    </location>
    <ligand>
        <name>UDP-N-acetyl-alpha-D-muramoyl-L-alanyl-D-glutamate</name>
        <dbReference type="ChEBI" id="CHEBI:83900"/>
    </ligand>
</feature>
<feature type="binding site" evidence="1">
    <location>
        <position position="181"/>
    </location>
    <ligand>
        <name>UDP-N-acetyl-alpha-D-muramoyl-L-alanyl-D-glutamate</name>
        <dbReference type="ChEBI" id="CHEBI:83900"/>
    </ligand>
</feature>
<feature type="binding site" evidence="1">
    <location>
        <position position="187"/>
    </location>
    <ligand>
        <name>UDP-N-acetyl-alpha-D-muramoyl-L-alanyl-D-glutamate</name>
        <dbReference type="ChEBI" id="CHEBI:83900"/>
    </ligand>
</feature>
<feature type="binding site" evidence="1">
    <location>
        <position position="189"/>
    </location>
    <ligand>
        <name>UDP-N-acetyl-alpha-D-muramoyl-L-alanyl-D-glutamate</name>
        <dbReference type="ChEBI" id="CHEBI:83900"/>
    </ligand>
</feature>
<feature type="binding site" evidence="1">
    <location>
        <position position="378"/>
    </location>
    <ligand>
        <name>meso-2,6-diaminopimelate</name>
        <dbReference type="ChEBI" id="CHEBI:57791"/>
    </ligand>
</feature>
<feature type="binding site" evidence="1">
    <location>
        <begin position="402"/>
        <end position="405"/>
    </location>
    <ligand>
        <name>meso-2,6-diaminopimelate</name>
        <dbReference type="ChEBI" id="CHEBI:57791"/>
    </ligand>
</feature>
<feature type="binding site" evidence="1">
    <location>
        <position position="455"/>
    </location>
    <ligand>
        <name>meso-2,6-diaminopimelate</name>
        <dbReference type="ChEBI" id="CHEBI:57791"/>
    </ligand>
</feature>
<feature type="binding site" evidence="1">
    <location>
        <position position="459"/>
    </location>
    <ligand>
        <name>meso-2,6-diaminopimelate</name>
        <dbReference type="ChEBI" id="CHEBI:57791"/>
    </ligand>
</feature>
<feature type="modified residue" description="N6-carboxylysine" evidence="1">
    <location>
        <position position="221"/>
    </location>
</feature>
<comment type="function">
    <text evidence="1">Catalyzes the addition of meso-diaminopimelic acid to the nucleotide precursor UDP-N-acetylmuramoyl-L-alanyl-D-glutamate (UMAG) in the biosynthesis of bacterial cell-wall peptidoglycan.</text>
</comment>
<comment type="catalytic activity">
    <reaction evidence="1">
        <text>UDP-N-acetyl-alpha-D-muramoyl-L-alanyl-D-glutamate + meso-2,6-diaminopimelate + ATP = UDP-N-acetyl-alpha-D-muramoyl-L-alanyl-gamma-D-glutamyl-meso-2,6-diaminopimelate + ADP + phosphate + H(+)</text>
        <dbReference type="Rhea" id="RHEA:23676"/>
        <dbReference type="ChEBI" id="CHEBI:15378"/>
        <dbReference type="ChEBI" id="CHEBI:30616"/>
        <dbReference type="ChEBI" id="CHEBI:43474"/>
        <dbReference type="ChEBI" id="CHEBI:57791"/>
        <dbReference type="ChEBI" id="CHEBI:83900"/>
        <dbReference type="ChEBI" id="CHEBI:83905"/>
        <dbReference type="ChEBI" id="CHEBI:456216"/>
        <dbReference type="EC" id="6.3.2.13"/>
    </reaction>
</comment>
<comment type="cofactor">
    <cofactor evidence="1">
        <name>Mg(2+)</name>
        <dbReference type="ChEBI" id="CHEBI:18420"/>
    </cofactor>
</comment>
<comment type="pathway">
    <text evidence="1">Cell wall biogenesis; peptidoglycan biosynthesis.</text>
</comment>
<comment type="subcellular location">
    <subcellularLocation>
        <location evidence="1">Cytoplasm</location>
    </subcellularLocation>
</comment>
<comment type="PTM">
    <text evidence="1">Carboxylation is probably crucial for Mg(2+) binding and, consequently, for the gamma-phosphate positioning of ATP.</text>
</comment>
<comment type="similarity">
    <text evidence="1">Belongs to the MurCDEF family. MurE subfamily.</text>
</comment>
<protein>
    <recommendedName>
        <fullName evidence="1">UDP-N-acetylmuramoyl-L-alanyl-D-glutamate--2,6-diaminopimelate ligase</fullName>
        <ecNumber evidence="1">6.3.2.13</ecNumber>
    </recommendedName>
    <alternativeName>
        <fullName evidence="1">Meso-A2pm-adding enzyme</fullName>
    </alternativeName>
    <alternativeName>
        <fullName evidence="1">Meso-diaminopimelate-adding enzyme</fullName>
    </alternativeName>
    <alternativeName>
        <fullName evidence="1">UDP-MurNAc-L-Ala-D-Glu:meso-diaminopimelate ligase</fullName>
    </alternativeName>
    <alternativeName>
        <fullName evidence="1">UDP-MurNAc-tripeptide synthetase</fullName>
    </alternativeName>
    <alternativeName>
        <fullName evidence="1">UDP-N-acetylmuramyl-tripeptide synthetase</fullName>
    </alternativeName>
</protein>
<proteinExistence type="inferred from homology"/>
<dbReference type="EC" id="6.3.2.13" evidence="1"/>
<dbReference type="EMBL" id="CP000383">
    <property type="protein sequence ID" value="ABG59995.1"/>
    <property type="molecule type" value="Genomic_DNA"/>
</dbReference>
<dbReference type="RefSeq" id="WP_011586105.1">
    <property type="nucleotide sequence ID" value="NC_008255.1"/>
</dbReference>
<dbReference type="SMR" id="Q11RG9"/>
<dbReference type="STRING" id="269798.CHU_2745"/>
<dbReference type="KEGG" id="chu:CHU_2745"/>
<dbReference type="eggNOG" id="COG0769">
    <property type="taxonomic scope" value="Bacteria"/>
</dbReference>
<dbReference type="HOGENOM" id="CLU_022291_4_1_10"/>
<dbReference type="OrthoDB" id="9800958at2"/>
<dbReference type="UniPathway" id="UPA00219"/>
<dbReference type="Proteomes" id="UP000001822">
    <property type="component" value="Chromosome"/>
</dbReference>
<dbReference type="GO" id="GO:0005737">
    <property type="term" value="C:cytoplasm"/>
    <property type="evidence" value="ECO:0007669"/>
    <property type="project" value="UniProtKB-SubCell"/>
</dbReference>
<dbReference type="GO" id="GO:0005524">
    <property type="term" value="F:ATP binding"/>
    <property type="evidence" value="ECO:0007669"/>
    <property type="project" value="UniProtKB-UniRule"/>
</dbReference>
<dbReference type="GO" id="GO:0000287">
    <property type="term" value="F:magnesium ion binding"/>
    <property type="evidence" value="ECO:0007669"/>
    <property type="project" value="UniProtKB-UniRule"/>
</dbReference>
<dbReference type="GO" id="GO:0008765">
    <property type="term" value="F:UDP-N-acetylmuramoylalanyl-D-glutamate-2,6-diaminopimelate ligase activity"/>
    <property type="evidence" value="ECO:0007669"/>
    <property type="project" value="UniProtKB-UniRule"/>
</dbReference>
<dbReference type="GO" id="GO:0051301">
    <property type="term" value="P:cell division"/>
    <property type="evidence" value="ECO:0007669"/>
    <property type="project" value="UniProtKB-KW"/>
</dbReference>
<dbReference type="GO" id="GO:0071555">
    <property type="term" value="P:cell wall organization"/>
    <property type="evidence" value="ECO:0007669"/>
    <property type="project" value="UniProtKB-KW"/>
</dbReference>
<dbReference type="GO" id="GO:0009252">
    <property type="term" value="P:peptidoglycan biosynthetic process"/>
    <property type="evidence" value="ECO:0007669"/>
    <property type="project" value="UniProtKB-UniRule"/>
</dbReference>
<dbReference type="GO" id="GO:0008360">
    <property type="term" value="P:regulation of cell shape"/>
    <property type="evidence" value="ECO:0007669"/>
    <property type="project" value="UniProtKB-KW"/>
</dbReference>
<dbReference type="Gene3D" id="3.90.190.20">
    <property type="entry name" value="Mur ligase, C-terminal domain"/>
    <property type="match status" value="1"/>
</dbReference>
<dbReference type="Gene3D" id="3.40.1190.10">
    <property type="entry name" value="Mur-like, catalytic domain"/>
    <property type="match status" value="1"/>
</dbReference>
<dbReference type="Gene3D" id="3.40.1390.10">
    <property type="entry name" value="MurE/MurF, N-terminal domain"/>
    <property type="match status" value="1"/>
</dbReference>
<dbReference type="HAMAP" id="MF_00208">
    <property type="entry name" value="MurE"/>
    <property type="match status" value="1"/>
</dbReference>
<dbReference type="InterPro" id="IPR036565">
    <property type="entry name" value="Mur-like_cat_sf"/>
</dbReference>
<dbReference type="InterPro" id="IPR004101">
    <property type="entry name" value="Mur_ligase_C"/>
</dbReference>
<dbReference type="InterPro" id="IPR036615">
    <property type="entry name" value="Mur_ligase_C_dom_sf"/>
</dbReference>
<dbReference type="InterPro" id="IPR013221">
    <property type="entry name" value="Mur_ligase_cen"/>
</dbReference>
<dbReference type="InterPro" id="IPR000713">
    <property type="entry name" value="Mur_ligase_N"/>
</dbReference>
<dbReference type="InterPro" id="IPR035911">
    <property type="entry name" value="MurE/MurF_N"/>
</dbReference>
<dbReference type="InterPro" id="IPR005761">
    <property type="entry name" value="UDP-N-AcMur-Glu-dNH2Pim_ligase"/>
</dbReference>
<dbReference type="NCBIfam" id="TIGR01085">
    <property type="entry name" value="murE"/>
    <property type="match status" value="1"/>
</dbReference>
<dbReference type="NCBIfam" id="NF001126">
    <property type="entry name" value="PRK00139.1-4"/>
    <property type="match status" value="1"/>
</dbReference>
<dbReference type="PANTHER" id="PTHR23135">
    <property type="entry name" value="MUR LIGASE FAMILY MEMBER"/>
    <property type="match status" value="1"/>
</dbReference>
<dbReference type="PANTHER" id="PTHR23135:SF4">
    <property type="entry name" value="UDP-N-ACETYLMURAMOYL-L-ALANYL-D-GLUTAMATE--2,6-DIAMINOPIMELATE LIGASE MURE HOMOLOG, CHLOROPLASTIC"/>
    <property type="match status" value="1"/>
</dbReference>
<dbReference type="Pfam" id="PF01225">
    <property type="entry name" value="Mur_ligase"/>
    <property type="match status" value="1"/>
</dbReference>
<dbReference type="Pfam" id="PF02875">
    <property type="entry name" value="Mur_ligase_C"/>
    <property type="match status" value="1"/>
</dbReference>
<dbReference type="Pfam" id="PF08245">
    <property type="entry name" value="Mur_ligase_M"/>
    <property type="match status" value="1"/>
</dbReference>
<dbReference type="SUPFAM" id="SSF53623">
    <property type="entry name" value="MurD-like peptide ligases, catalytic domain"/>
    <property type="match status" value="1"/>
</dbReference>
<dbReference type="SUPFAM" id="SSF53244">
    <property type="entry name" value="MurD-like peptide ligases, peptide-binding domain"/>
    <property type="match status" value="1"/>
</dbReference>
<dbReference type="SUPFAM" id="SSF63418">
    <property type="entry name" value="MurE/MurF N-terminal domain"/>
    <property type="match status" value="1"/>
</dbReference>